<name>VSPA_DEIAC</name>
<feature type="propeptide" id="PRO_0000416383">
    <location>
        <begin position="1" status="less than"/>
        <end position="1"/>
    </location>
</feature>
<feature type="chain" id="PRO_0000416384" description="Thrombin-like enzyme acutin">
    <location>
        <begin position="2"/>
        <end position="234"/>
    </location>
</feature>
<feature type="domain" description="Peptidase S1" evidence="3">
    <location>
        <begin position="2"/>
        <end position="225"/>
    </location>
</feature>
<feature type="active site" description="Charge relay system" evidence="1">
    <location>
        <position position="42"/>
    </location>
</feature>
<feature type="active site" description="Charge relay system" evidence="1">
    <location>
        <position position="87"/>
    </location>
</feature>
<feature type="active site" description="Charge relay system" evidence="1">
    <location>
        <position position="180"/>
    </location>
</feature>
<feature type="glycosylation site" description="N-linked (GlcNAc...) asparagine" evidence="2">
    <location>
        <position position="21"/>
    </location>
</feature>
<feature type="disulfide bond" evidence="3">
    <location>
        <begin position="8"/>
        <end position="140"/>
    </location>
</feature>
<feature type="disulfide bond" evidence="3">
    <location>
        <begin position="27"/>
        <end position="43"/>
    </location>
</feature>
<feature type="disulfide bond" evidence="3">
    <location>
        <begin position="75"/>
        <end position="232"/>
    </location>
</feature>
<feature type="disulfide bond" evidence="3">
    <location>
        <begin position="119"/>
        <end position="186"/>
    </location>
</feature>
<feature type="disulfide bond" evidence="3">
    <location>
        <begin position="151"/>
        <end position="165"/>
    </location>
</feature>
<feature type="disulfide bond" evidence="3">
    <location>
        <begin position="176"/>
        <end position="201"/>
    </location>
</feature>
<feature type="sequence conflict" description="In Ref. 1; AA sequence." evidence="5" ref="1">
    <original>D</original>
    <variation>V</variation>
    <location>
        <position position="6"/>
    </location>
</feature>
<feature type="non-terminal residue">
    <location>
        <position position="1"/>
    </location>
</feature>
<protein>
    <recommendedName>
        <fullName>Thrombin-like enzyme acutin</fullName>
        <shortName>SVTLE acutin</shortName>
        <ecNumber>3.4.21.-</ecNumber>
    </recommendedName>
    <alternativeName>
        <fullName>Fibrinogen-clotting enzyme</fullName>
    </alternativeName>
    <alternativeName>
        <fullName>Snake venom serine protease</fullName>
        <shortName>SVSP</shortName>
    </alternativeName>
    <alternativeName>
        <fullName>Thrombin-like defibrase 1</fullName>
        <shortName>DFA1</shortName>
    </alternativeName>
</protein>
<accession>Q9YGS1</accession>
<keyword id="KW-1204">Blood coagulation cascade activating toxin</keyword>
<keyword id="KW-0903">Direct protein sequencing</keyword>
<keyword id="KW-1015">Disulfide bond</keyword>
<keyword id="KW-0325">Glycoprotein</keyword>
<keyword id="KW-1199">Hemostasis impairing toxin</keyword>
<keyword id="KW-0378">Hydrolase</keyword>
<keyword id="KW-0645">Protease</keyword>
<keyword id="KW-0964">Secreted</keyword>
<keyword id="KW-0720">Serine protease</keyword>
<keyword id="KW-0800">Toxin</keyword>
<keyword id="KW-0865">Zymogen</keyword>
<dbReference type="EC" id="3.4.21.-"/>
<dbReference type="EMBL" id="AF089847">
    <property type="protein sequence ID" value="AAD19350.1"/>
    <property type="molecule type" value="mRNA"/>
</dbReference>
<dbReference type="PIR" id="JG0169">
    <property type="entry name" value="JG0169"/>
</dbReference>
<dbReference type="SMR" id="Q9YGS1"/>
<dbReference type="MEROPS" id="S01.023"/>
<dbReference type="GO" id="GO:0005576">
    <property type="term" value="C:extracellular region"/>
    <property type="evidence" value="ECO:0007669"/>
    <property type="project" value="UniProtKB-SubCell"/>
</dbReference>
<dbReference type="GO" id="GO:0030141">
    <property type="term" value="C:secretory granule"/>
    <property type="evidence" value="ECO:0007669"/>
    <property type="project" value="TreeGrafter"/>
</dbReference>
<dbReference type="GO" id="GO:0004252">
    <property type="term" value="F:serine-type endopeptidase activity"/>
    <property type="evidence" value="ECO:0007669"/>
    <property type="project" value="InterPro"/>
</dbReference>
<dbReference type="GO" id="GO:0090729">
    <property type="term" value="F:toxin activity"/>
    <property type="evidence" value="ECO:0007669"/>
    <property type="project" value="UniProtKB-KW"/>
</dbReference>
<dbReference type="GO" id="GO:0006508">
    <property type="term" value="P:proteolysis"/>
    <property type="evidence" value="ECO:0007669"/>
    <property type="project" value="UniProtKB-KW"/>
</dbReference>
<dbReference type="CDD" id="cd00190">
    <property type="entry name" value="Tryp_SPc"/>
    <property type="match status" value="1"/>
</dbReference>
<dbReference type="FunFam" id="2.40.10.10:FF:000158">
    <property type="entry name" value="Thrombin-like enzyme saxthrombin"/>
    <property type="match status" value="1"/>
</dbReference>
<dbReference type="FunFam" id="2.40.10.10:FF:000153">
    <property type="entry name" value="Venom plasminogen activator TSV-PA"/>
    <property type="match status" value="1"/>
</dbReference>
<dbReference type="Gene3D" id="2.40.10.10">
    <property type="entry name" value="Trypsin-like serine proteases"/>
    <property type="match status" value="2"/>
</dbReference>
<dbReference type="InterPro" id="IPR009003">
    <property type="entry name" value="Peptidase_S1_PA"/>
</dbReference>
<dbReference type="InterPro" id="IPR043504">
    <property type="entry name" value="Peptidase_S1_PA_chymotrypsin"/>
</dbReference>
<dbReference type="InterPro" id="IPR001314">
    <property type="entry name" value="Peptidase_S1A"/>
</dbReference>
<dbReference type="InterPro" id="IPR001254">
    <property type="entry name" value="Trypsin_dom"/>
</dbReference>
<dbReference type="InterPro" id="IPR018114">
    <property type="entry name" value="TRYPSIN_HIS"/>
</dbReference>
<dbReference type="InterPro" id="IPR033116">
    <property type="entry name" value="TRYPSIN_SER"/>
</dbReference>
<dbReference type="PANTHER" id="PTHR24271:SF47">
    <property type="entry name" value="KALLIKREIN-1"/>
    <property type="match status" value="1"/>
</dbReference>
<dbReference type="PANTHER" id="PTHR24271">
    <property type="entry name" value="KALLIKREIN-RELATED"/>
    <property type="match status" value="1"/>
</dbReference>
<dbReference type="Pfam" id="PF00089">
    <property type="entry name" value="Trypsin"/>
    <property type="match status" value="1"/>
</dbReference>
<dbReference type="PRINTS" id="PR00722">
    <property type="entry name" value="CHYMOTRYPSIN"/>
</dbReference>
<dbReference type="SMART" id="SM00020">
    <property type="entry name" value="Tryp_SPc"/>
    <property type="match status" value="1"/>
</dbReference>
<dbReference type="SUPFAM" id="SSF50494">
    <property type="entry name" value="Trypsin-like serine proteases"/>
    <property type="match status" value="1"/>
</dbReference>
<dbReference type="PROSITE" id="PS50240">
    <property type="entry name" value="TRYPSIN_DOM"/>
    <property type="match status" value="1"/>
</dbReference>
<dbReference type="PROSITE" id="PS00134">
    <property type="entry name" value="TRYPSIN_HIS"/>
    <property type="match status" value="1"/>
</dbReference>
<dbReference type="PROSITE" id="PS00135">
    <property type="entry name" value="TRYPSIN_SER"/>
    <property type="match status" value="1"/>
</dbReference>
<sequence length="234" mass="25408">MVIGGDECDINEHRFLVAFFNTTGFFCGGTLINPEWVVTAAHCDSTNFQMQLGVHSKKVLNEDEQTRNPKEKFICPNKNNNEVLDKDIMLIKLDKPISNSKHIAPLSLPSSPPSVGSVCRIMGWGSITPVKETFPDVPYCANINLLDHAVCQTGYPSCWRNTTLCAGFLEGGKDTCGGDSGGPLICNGQFQGIVSYGAHSCGQGPKPGIYTNVFDYTDWIQRNIAGNTDATCPP</sequence>
<evidence type="ECO:0000250" key="1"/>
<evidence type="ECO:0000255" key="2"/>
<evidence type="ECO:0000255" key="3">
    <source>
        <dbReference type="PROSITE-ProRule" id="PRU00274"/>
    </source>
</evidence>
<evidence type="ECO:0000269" key="4">
    <source>
    </source>
</evidence>
<evidence type="ECO:0000305" key="5"/>
<evidence type="ECO:0000305" key="6">
    <source>
    </source>
</evidence>
<reference key="1">
    <citation type="journal article" date="1999" name="Biochem. Biophys. Res. Commun.">
        <title>cDNA cloning and expression of acutin, a thrombin-like enzyme from Agkistrodon acutus.</title>
        <authorList>
            <person name="Pan H."/>
            <person name="Du X."/>
            <person name="Yang G."/>
            <person name="Zhou Y."/>
            <person name="Wu X."/>
        </authorList>
    </citation>
    <scope>NUCLEOTIDE SEQUENCE [MRNA]</scope>
    <scope>PROTEIN SEQUENCE OF 2-16</scope>
    <scope>FUNCTION</scope>
    <source>
        <tissue>Venom</tissue>
        <tissue>Venom gland</tissue>
    </source>
</reference>
<comment type="function">
    <text evidence="4">Thrombin-like snake venom serine protease. Has arginyl esterase and fibrinogen clotting activities.</text>
</comment>
<comment type="subunit">
    <text evidence="1">Monomer.</text>
</comment>
<comment type="subcellular location">
    <subcellularLocation>
        <location>Secreted</location>
    </subcellularLocation>
</comment>
<comment type="tissue specificity">
    <text>Expressed by the venom gland.</text>
</comment>
<comment type="miscellaneous">
    <text evidence="6">Negative results: does not have phospholipase, fibrinolytic and hemorrhagic activities.</text>
</comment>
<comment type="similarity">
    <text evidence="3">Belongs to the peptidase S1 family. Snake venom subfamily.</text>
</comment>
<proteinExistence type="evidence at protein level"/>
<organism>
    <name type="scientific">Deinagkistrodon acutus</name>
    <name type="common">Hundred-pace snake</name>
    <name type="synonym">Agkistrodon acutus</name>
    <dbReference type="NCBI Taxonomy" id="36307"/>
    <lineage>
        <taxon>Eukaryota</taxon>
        <taxon>Metazoa</taxon>
        <taxon>Chordata</taxon>
        <taxon>Craniata</taxon>
        <taxon>Vertebrata</taxon>
        <taxon>Euteleostomi</taxon>
        <taxon>Lepidosauria</taxon>
        <taxon>Squamata</taxon>
        <taxon>Bifurcata</taxon>
        <taxon>Unidentata</taxon>
        <taxon>Episquamata</taxon>
        <taxon>Toxicofera</taxon>
        <taxon>Serpentes</taxon>
        <taxon>Colubroidea</taxon>
        <taxon>Viperidae</taxon>
        <taxon>Crotalinae</taxon>
        <taxon>Deinagkistrodon</taxon>
    </lineage>
</organism>